<comment type="catalytic activity">
    <reaction evidence="1">
        <text>tRNA(Cys) + L-cysteine + ATP = L-cysteinyl-tRNA(Cys) + AMP + diphosphate</text>
        <dbReference type="Rhea" id="RHEA:17773"/>
        <dbReference type="Rhea" id="RHEA-COMP:9661"/>
        <dbReference type="Rhea" id="RHEA-COMP:9679"/>
        <dbReference type="ChEBI" id="CHEBI:30616"/>
        <dbReference type="ChEBI" id="CHEBI:33019"/>
        <dbReference type="ChEBI" id="CHEBI:35235"/>
        <dbReference type="ChEBI" id="CHEBI:78442"/>
        <dbReference type="ChEBI" id="CHEBI:78517"/>
        <dbReference type="ChEBI" id="CHEBI:456215"/>
        <dbReference type="EC" id="6.1.1.16"/>
    </reaction>
</comment>
<comment type="cofactor">
    <cofactor evidence="1">
        <name>Zn(2+)</name>
        <dbReference type="ChEBI" id="CHEBI:29105"/>
    </cofactor>
    <text evidence="1">Binds 1 zinc ion per subunit.</text>
</comment>
<comment type="subunit">
    <text evidence="1">Monomer.</text>
</comment>
<comment type="subcellular location">
    <subcellularLocation>
        <location evidence="1">Cytoplasm</location>
    </subcellularLocation>
</comment>
<comment type="similarity">
    <text evidence="1">Belongs to the class-I aminoacyl-tRNA synthetase family.</text>
</comment>
<dbReference type="EC" id="6.1.1.16" evidence="1"/>
<dbReference type="EMBL" id="AL935263">
    <property type="protein sequence ID" value="CCC78090.1"/>
    <property type="molecule type" value="Genomic_DNA"/>
</dbReference>
<dbReference type="RefSeq" id="WP_011101074.1">
    <property type="nucleotide sequence ID" value="NC_004567.2"/>
</dbReference>
<dbReference type="RefSeq" id="YP_004888604.1">
    <property type="nucleotide sequence ID" value="NC_004567.2"/>
</dbReference>
<dbReference type="SMR" id="Q88YX9"/>
<dbReference type="STRING" id="220668.lp_0610"/>
<dbReference type="EnsemblBacteria" id="CCC78090">
    <property type="protein sequence ID" value="CCC78090"/>
    <property type="gene ID" value="lp_0610"/>
</dbReference>
<dbReference type="GeneID" id="77217214"/>
<dbReference type="KEGG" id="lpl:lp_0610"/>
<dbReference type="PATRIC" id="fig|220668.9.peg.510"/>
<dbReference type="eggNOG" id="COG0215">
    <property type="taxonomic scope" value="Bacteria"/>
</dbReference>
<dbReference type="HOGENOM" id="CLU_013528_0_1_9"/>
<dbReference type="OrthoDB" id="9815130at2"/>
<dbReference type="PhylomeDB" id="Q88YX9"/>
<dbReference type="Proteomes" id="UP000000432">
    <property type="component" value="Chromosome"/>
</dbReference>
<dbReference type="GO" id="GO:0005829">
    <property type="term" value="C:cytosol"/>
    <property type="evidence" value="ECO:0007669"/>
    <property type="project" value="TreeGrafter"/>
</dbReference>
<dbReference type="GO" id="GO:0005524">
    <property type="term" value="F:ATP binding"/>
    <property type="evidence" value="ECO:0007669"/>
    <property type="project" value="UniProtKB-UniRule"/>
</dbReference>
<dbReference type="GO" id="GO:0004817">
    <property type="term" value="F:cysteine-tRNA ligase activity"/>
    <property type="evidence" value="ECO:0007669"/>
    <property type="project" value="UniProtKB-UniRule"/>
</dbReference>
<dbReference type="GO" id="GO:0008270">
    <property type="term" value="F:zinc ion binding"/>
    <property type="evidence" value="ECO:0007669"/>
    <property type="project" value="UniProtKB-UniRule"/>
</dbReference>
<dbReference type="GO" id="GO:0006423">
    <property type="term" value="P:cysteinyl-tRNA aminoacylation"/>
    <property type="evidence" value="ECO:0007669"/>
    <property type="project" value="UniProtKB-UniRule"/>
</dbReference>
<dbReference type="CDD" id="cd00672">
    <property type="entry name" value="CysRS_core"/>
    <property type="match status" value="1"/>
</dbReference>
<dbReference type="FunFam" id="3.40.50.620:FF:000009">
    <property type="entry name" value="Cysteine--tRNA ligase"/>
    <property type="match status" value="1"/>
</dbReference>
<dbReference type="Gene3D" id="1.20.120.1910">
    <property type="entry name" value="Cysteine-tRNA ligase, C-terminal anti-codon recognition domain"/>
    <property type="match status" value="1"/>
</dbReference>
<dbReference type="Gene3D" id="3.40.50.620">
    <property type="entry name" value="HUPs"/>
    <property type="match status" value="1"/>
</dbReference>
<dbReference type="HAMAP" id="MF_00041">
    <property type="entry name" value="Cys_tRNA_synth"/>
    <property type="match status" value="1"/>
</dbReference>
<dbReference type="InterPro" id="IPR015803">
    <property type="entry name" value="Cys-tRNA-ligase"/>
</dbReference>
<dbReference type="InterPro" id="IPR015273">
    <property type="entry name" value="Cys-tRNA-synt_Ia_DALR"/>
</dbReference>
<dbReference type="InterPro" id="IPR024909">
    <property type="entry name" value="Cys-tRNA/MSH_ligase"/>
</dbReference>
<dbReference type="InterPro" id="IPR056411">
    <property type="entry name" value="CysS_C"/>
</dbReference>
<dbReference type="InterPro" id="IPR014729">
    <property type="entry name" value="Rossmann-like_a/b/a_fold"/>
</dbReference>
<dbReference type="InterPro" id="IPR032678">
    <property type="entry name" value="tRNA-synt_1_cat_dom"/>
</dbReference>
<dbReference type="InterPro" id="IPR009080">
    <property type="entry name" value="tRNAsynth_Ia_anticodon-bd"/>
</dbReference>
<dbReference type="NCBIfam" id="TIGR00435">
    <property type="entry name" value="cysS"/>
    <property type="match status" value="1"/>
</dbReference>
<dbReference type="PANTHER" id="PTHR10890:SF3">
    <property type="entry name" value="CYSTEINE--TRNA LIGASE, CYTOPLASMIC"/>
    <property type="match status" value="1"/>
</dbReference>
<dbReference type="PANTHER" id="PTHR10890">
    <property type="entry name" value="CYSTEINYL-TRNA SYNTHETASE"/>
    <property type="match status" value="1"/>
</dbReference>
<dbReference type="Pfam" id="PF23493">
    <property type="entry name" value="CysS_C"/>
    <property type="match status" value="1"/>
</dbReference>
<dbReference type="Pfam" id="PF09190">
    <property type="entry name" value="DALR_2"/>
    <property type="match status" value="1"/>
</dbReference>
<dbReference type="Pfam" id="PF01406">
    <property type="entry name" value="tRNA-synt_1e"/>
    <property type="match status" value="1"/>
</dbReference>
<dbReference type="PRINTS" id="PR00983">
    <property type="entry name" value="TRNASYNTHCYS"/>
</dbReference>
<dbReference type="SMART" id="SM00840">
    <property type="entry name" value="DALR_2"/>
    <property type="match status" value="1"/>
</dbReference>
<dbReference type="SUPFAM" id="SSF47323">
    <property type="entry name" value="Anticodon-binding domain of a subclass of class I aminoacyl-tRNA synthetases"/>
    <property type="match status" value="1"/>
</dbReference>
<dbReference type="SUPFAM" id="SSF52374">
    <property type="entry name" value="Nucleotidylyl transferase"/>
    <property type="match status" value="1"/>
</dbReference>
<organism>
    <name type="scientific">Lactiplantibacillus plantarum (strain ATCC BAA-793 / NCIMB 8826 / WCFS1)</name>
    <name type="common">Lactobacillus plantarum</name>
    <dbReference type="NCBI Taxonomy" id="220668"/>
    <lineage>
        <taxon>Bacteria</taxon>
        <taxon>Bacillati</taxon>
        <taxon>Bacillota</taxon>
        <taxon>Bacilli</taxon>
        <taxon>Lactobacillales</taxon>
        <taxon>Lactobacillaceae</taxon>
        <taxon>Lactiplantibacillus</taxon>
    </lineage>
</organism>
<gene>
    <name evidence="1" type="primary">cysS</name>
    <name type="ordered locus">lp_0610</name>
</gene>
<sequence>MLSVFNTLTRQKEPFKPITPGVVKMYVCGPTVYNYIHIGNARSAIAFDTIRRYFEYCGYHVDYVSNFTDVDDKLIKRAAEDHTTVPAVADRFIKAFMEDTTAVNIEPATVHPRASENIPEIIAFVQALIEKGYAYESAGDVYYRARKFKKYGQLSDQRIDDLEVGASQHTADEETDRKEDPIDFALWKAAKPGEISWESPWGAGRPGWHIECSVMSTKYLGDTFDIHGGGQDLEFPHHENEIAQSEAKTGKTFANYWLHNGFVTVGDDNEKMSKSLGNFVTVHDIIKTVDPQVLRFFMATTQYRRPIQYTQANLDEAANNLDKLRNAYRNLTFRLQDATNGTDTAVAEQLQTLITNFGTAMDDDFNVQNGVAAVYELAKLANVYAAKATVQKETLIALQKALVQLTGVFGVTFETANATLADDAIQALIDEREAARKAKDFAKADQIRDDLKVQGIMLEDTPQGVRFRKE</sequence>
<feature type="chain" id="PRO_0000159414" description="Cysteine--tRNA ligase">
    <location>
        <begin position="1"/>
        <end position="470"/>
    </location>
</feature>
<feature type="short sequence motif" description="'HIGH' region">
    <location>
        <begin position="30"/>
        <end position="40"/>
    </location>
</feature>
<feature type="short sequence motif" description="'KMSKS' region">
    <location>
        <begin position="271"/>
        <end position="275"/>
    </location>
</feature>
<feature type="binding site" evidence="1">
    <location>
        <position position="28"/>
    </location>
    <ligand>
        <name>Zn(2+)</name>
        <dbReference type="ChEBI" id="CHEBI:29105"/>
    </ligand>
</feature>
<feature type="binding site" evidence="1">
    <location>
        <position position="212"/>
    </location>
    <ligand>
        <name>Zn(2+)</name>
        <dbReference type="ChEBI" id="CHEBI:29105"/>
    </ligand>
</feature>
<feature type="binding site" evidence="1">
    <location>
        <position position="237"/>
    </location>
    <ligand>
        <name>Zn(2+)</name>
        <dbReference type="ChEBI" id="CHEBI:29105"/>
    </ligand>
</feature>
<feature type="binding site" evidence="1">
    <location>
        <position position="241"/>
    </location>
    <ligand>
        <name>Zn(2+)</name>
        <dbReference type="ChEBI" id="CHEBI:29105"/>
    </ligand>
</feature>
<feature type="binding site" evidence="1">
    <location>
        <position position="274"/>
    </location>
    <ligand>
        <name>ATP</name>
        <dbReference type="ChEBI" id="CHEBI:30616"/>
    </ligand>
</feature>
<proteinExistence type="inferred from homology"/>
<accession>Q88YX9</accession>
<accession>F9UL75</accession>
<protein>
    <recommendedName>
        <fullName evidence="1">Cysteine--tRNA ligase</fullName>
        <ecNumber evidence="1">6.1.1.16</ecNumber>
    </recommendedName>
    <alternativeName>
        <fullName evidence="1">Cysteinyl-tRNA synthetase</fullName>
        <shortName evidence="1">CysRS</shortName>
    </alternativeName>
</protein>
<keyword id="KW-0030">Aminoacyl-tRNA synthetase</keyword>
<keyword id="KW-0067">ATP-binding</keyword>
<keyword id="KW-0963">Cytoplasm</keyword>
<keyword id="KW-0436">Ligase</keyword>
<keyword id="KW-0479">Metal-binding</keyword>
<keyword id="KW-0547">Nucleotide-binding</keyword>
<keyword id="KW-0648">Protein biosynthesis</keyword>
<keyword id="KW-1185">Reference proteome</keyword>
<keyword id="KW-0862">Zinc</keyword>
<evidence type="ECO:0000255" key="1">
    <source>
        <dbReference type="HAMAP-Rule" id="MF_00041"/>
    </source>
</evidence>
<name>SYC_LACPL</name>
<reference key="1">
    <citation type="journal article" date="2003" name="Proc. Natl. Acad. Sci. U.S.A.">
        <title>Complete genome sequence of Lactobacillus plantarum WCFS1.</title>
        <authorList>
            <person name="Kleerebezem M."/>
            <person name="Boekhorst J."/>
            <person name="van Kranenburg R."/>
            <person name="Molenaar D."/>
            <person name="Kuipers O.P."/>
            <person name="Leer R."/>
            <person name="Tarchini R."/>
            <person name="Peters S.A."/>
            <person name="Sandbrink H.M."/>
            <person name="Fiers M.W.E.J."/>
            <person name="Stiekema W."/>
            <person name="Klein Lankhorst R.M."/>
            <person name="Bron P.A."/>
            <person name="Hoffer S.M."/>
            <person name="Nierop Groot M.N."/>
            <person name="Kerkhoven R."/>
            <person name="De Vries M."/>
            <person name="Ursing B."/>
            <person name="De Vos W.M."/>
            <person name="Siezen R.J."/>
        </authorList>
    </citation>
    <scope>NUCLEOTIDE SEQUENCE [LARGE SCALE GENOMIC DNA]</scope>
    <source>
        <strain>ATCC BAA-793 / NCIMB 8826 / WCFS1</strain>
    </source>
</reference>
<reference key="2">
    <citation type="journal article" date="2012" name="J. Bacteriol.">
        <title>Complete resequencing and reannotation of the Lactobacillus plantarum WCFS1 genome.</title>
        <authorList>
            <person name="Siezen R.J."/>
            <person name="Francke C."/>
            <person name="Renckens B."/>
            <person name="Boekhorst J."/>
            <person name="Wels M."/>
            <person name="Kleerebezem M."/>
            <person name="van Hijum S.A."/>
        </authorList>
    </citation>
    <scope>NUCLEOTIDE SEQUENCE [LARGE SCALE GENOMIC DNA]</scope>
    <scope>GENOME REANNOTATION</scope>
    <source>
        <strain>ATCC BAA-793 / NCIMB 8826 / WCFS1</strain>
    </source>
</reference>